<protein>
    <recommendedName>
        <fullName>Agglutinin-like protein 3</fullName>
    </recommendedName>
    <alternativeName>
        <fullName>3D9 antigen</fullName>
    </alternativeName>
    <alternativeName>
        <fullName>Adhesin 3</fullName>
    </alternativeName>
</protein>
<keyword id="KW-0002">3D-structure</keyword>
<keyword id="KW-0130">Cell adhesion</keyword>
<keyword id="KW-1003">Cell membrane</keyword>
<keyword id="KW-0134">Cell wall</keyword>
<keyword id="KW-1015">Disulfide bond</keyword>
<keyword id="KW-0325">Glycoprotein</keyword>
<keyword id="KW-0336">GPI-anchor</keyword>
<keyword id="KW-0449">Lipoprotein</keyword>
<keyword id="KW-0472">Membrane</keyword>
<keyword id="KW-0677">Repeat</keyword>
<keyword id="KW-0964">Secreted</keyword>
<keyword id="KW-0732">Signal</keyword>
<keyword id="KW-0843">Virulence</keyword>
<accession>O74623</accession>
<name>ALS3_CANAX</name>
<dbReference type="EMBL" id="U87956">
    <property type="protein sequence ID" value="AAC39486.1"/>
    <property type="molecule type" value="Genomic_DNA"/>
</dbReference>
<dbReference type="PDB" id="4LEE">
    <property type="method" value="X-ray"/>
    <property type="resolution" value="3.00 A"/>
    <property type="chains" value="A/B/C/D=18-330"/>
</dbReference>
<dbReference type="PDBsum" id="4LEE"/>
<dbReference type="SMR" id="O74623"/>
<dbReference type="GlyCosmos" id="O74623">
    <property type="glycosylation" value="11 sites, No reported glycans"/>
</dbReference>
<dbReference type="VEuPathDB" id="FungiDB:CAWG_02004"/>
<dbReference type="VEuPathDB" id="FungiDB:CAWG_02005"/>
<dbReference type="VEuPathDB" id="FungiDB:CR_07070C_A"/>
<dbReference type="GO" id="GO:0009986">
    <property type="term" value="C:cell surface"/>
    <property type="evidence" value="ECO:0007669"/>
    <property type="project" value="TreeGrafter"/>
</dbReference>
<dbReference type="GO" id="GO:1903561">
    <property type="term" value="C:extracellular vesicle"/>
    <property type="evidence" value="ECO:0007669"/>
    <property type="project" value="TreeGrafter"/>
</dbReference>
<dbReference type="GO" id="GO:0030446">
    <property type="term" value="C:hyphal cell wall"/>
    <property type="evidence" value="ECO:0007669"/>
    <property type="project" value="TreeGrafter"/>
</dbReference>
<dbReference type="GO" id="GO:0005886">
    <property type="term" value="C:plasma membrane"/>
    <property type="evidence" value="ECO:0007669"/>
    <property type="project" value="UniProtKB-SubCell"/>
</dbReference>
<dbReference type="GO" id="GO:0098552">
    <property type="term" value="C:side of membrane"/>
    <property type="evidence" value="ECO:0007669"/>
    <property type="project" value="UniProtKB-KW"/>
</dbReference>
<dbReference type="GO" id="GO:0030445">
    <property type="term" value="C:yeast-form cell wall"/>
    <property type="evidence" value="ECO:0007669"/>
    <property type="project" value="TreeGrafter"/>
</dbReference>
<dbReference type="GO" id="GO:0044403">
    <property type="term" value="P:biological process involved in symbiotic interaction"/>
    <property type="evidence" value="ECO:0007669"/>
    <property type="project" value="UniProtKB-ARBA"/>
</dbReference>
<dbReference type="GO" id="GO:0098609">
    <property type="term" value="P:cell-cell adhesion"/>
    <property type="evidence" value="ECO:0007669"/>
    <property type="project" value="TreeGrafter"/>
</dbReference>
<dbReference type="GO" id="GO:0030448">
    <property type="term" value="P:hyphal growth"/>
    <property type="evidence" value="ECO:0007669"/>
    <property type="project" value="TreeGrafter"/>
</dbReference>
<dbReference type="FunFam" id="2.60.40.1280:FF:000001">
    <property type="entry name" value="Agglutinin-like protein 3"/>
    <property type="match status" value="1"/>
</dbReference>
<dbReference type="FunFam" id="2.60.40.2430:FF:000001">
    <property type="entry name" value="Agglutinin-like protein 3"/>
    <property type="match status" value="1"/>
</dbReference>
<dbReference type="Gene3D" id="2.60.40.1280">
    <property type="match status" value="1"/>
</dbReference>
<dbReference type="Gene3D" id="2.60.40.2430">
    <property type="entry name" value="Agglutinin-like protein, N-terminal domain, N2 subdomain"/>
    <property type="match status" value="1"/>
</dbReference>
<dbReference type="InterPro" id="IPR008966">
    <property type="entry name" value="Adhesion_dom_sf"/>
</dbReference>
<dbReference type="InterPro" id="IPR008440">
    <property type="entry name" value="Agglutinin-like_ALS_rpt"/>
</dbReference>
<dbReference type="InterPro" id="IPR024672">
    <property type="entry name" value="Agglutinin-like_N"/>
</dbReference>
<dbReference type="InterPro" id="IPR043063">
    <property type="entry name" value="Agglutinin-like_N_N2"/>
</dbReference>
<dbReference type="InterPro" id="IPR033504">
    <property type="entry name" value="ALS"/>
</dbReference>
<dbReference type="InterPro" id="IPR011252">
    <property type="entry name" value="Fibrogen-bd_dom1"/>
</dbReference>
<dbReference type="PANTHER" id="PTHR33793:SF2">
    <property type="entry name" value="AGGLUTININ-LIKE PROTEIN 6"/>
    <property type="match status" value="1"/>
</dbReference>
<dbReference type="PANTHER" id="PTHR33793">
    <property type="entry name" value="ALPHA-AGGLUTININ"/>
    <property type="match status" value="1"/>
</dbReference>
<dbReference type="Pfam" id="PF05792">
    <property type="entry name" value="Candida_ALS"/>
    <property type="match status" value="13"/>
</dbReference>
<dbReference type="Pfam" id="PF11766">
    <property type="entry name" value="Candida_ALS_N"/>
    <property type="match status" value="1"/>
</dbReference>
<dbReference type="SMART" id="SM01056">
    <property type="entry name" value="Candida_ALS_N"/>
    <property type="match status" value="1"/>
</dbReference>
<dbReference type="SUPFAM" id="SSF49401">
    <property type="entry name" value="Bacterial adhesins"/>
    <property type="match status" value="1"/>
</dbReference>
<evidence type="ECO:0000250" key="1">
    <source>
        <dbReference type="UniProtKB" id="Q59L12"/>
    </source>
</evidence>
<evidence type="ECO:0000255" key="2"/>
<evidence type="ECO:0000256" key="3">
    <source>
        <dbReference type="SAM" id="MobiDB-lite"/>
    </source>
</evidence>
<evidence type="ECO:0000305" key="4"/>
<sequence length="1119" mass="119927">MLQQYTLLLIYLSVATAKTITGVFNSFNSLTWSNAATYNYKGPGTPTWNAVLGWSLDGTSASPGDTFTLNMPCVFKFTTSQTSVDLTAHGVKYATCQFQAGEEFMTFSTLTCTVSNTLTPSIKALGTVTLPLAFNVGGTGSSVDLEDSKCFTAGTNTVTFNDGGKKISINVDFERSNVDPKGYLTDSRVIPSLNKVSTLFVAPQCANGYTSGTMGFANTYGDVQIDCSNIHVGITKGLNDWNYPVSSESFSYTKTCSSNGIFITYKNVPAGYRPFVDAYISATDVNSYTLSYANEYTCAGGYWQRAPFTLRWTGYRNSDAGSNGIVIVATTRTVTDSTTAVTTLPFDPNRDKTKTIEILKPIPTTTITTSYVGVTTSYSTKTAPIGETATVIVDIPYHTTTTVTSKWTGTITSTTTHTNPTDSIDTVIVQVPSPNPTVTTTEYWSQSFATTTTITGPPGNTDTVLIREPPNHTVTTTEYWSESYTTTSTFTAPPGGTDSVIIKEPPNPTVTTTEYWSESYTTTSTFTAPPGGTDSVIIKEPPNHTVTTTEYWSQSYTTTTTVTAPPGGTDTVLVREPPNHTVTTTEYWSQSYTTTTTVIAPPGGTDSVIIREPPNPTVTTTEYWSQSYATTTTITAPPGETDTVLIREPPNHTVTTTEYWSQSYATTTTITAPPGETDTVLIREPPNHTVTTTEYWSQSFATTTTVTAPPGGTDTVIIREPPNHTVTTTEYWSQSYATTTTITAPPGETDTVLIREPPNHTVTTTEYWSQSYATTTTIIAPPGETDTVLIREPPNPTVTTTEYWSQSYTTATTVTAPPGGTDTVIIYDTMSSSEISSFSRPHYTNHTTLWSTTWVIETKTITETSCEGDKGCSWVSVSTRIVTIPNNIETPMVTNTVDSTTTESTSQSPSGIFSESGVSVETESSTVTTAQTNPSVPTTESEVVFTTKGNNENGPYESPSTNVKSSMDENSEFTTSTAASTSTDIENETIATTGSVEASSPIISSSADETTTVTTTAESTSVIEQPTNNNGGGKAPSATSSPSTTTTANNDSVITGTTSTNQSQSQSQYNSDTQQTTLSQQMTSSLVSLHMLTTFDGSGSVIQHSTWLCGLITLLSLFI</sequence>
<comment type="function">
    <text evidence="1">Cell surface adhesion protein which mediates both yeast-to-host tissue adherence and yeast aggregation. Plays an important role in the biofilm formation and pathogenesis of C.albicans infections. Necessary for C.albicans to bind to N-cadherin on endothelial cells and E-cadherin on oral epithelial cells and subsequent endocytosis by these cells. During disseminated infection, mediates initial trafficking to the brain and renal cortex and contributes to fungal persistence in the kidneys.</text>
</comment>
<comment type="subcellular location">
    <subcellularLocation>
        <location evidence="1">Cell membrane</location>
        <topology evidence="1">Lipid-anchor</topology>
        <topology evidence="1">GPI-anchor</topology>
    </subcellularLocation>
    <subcellularLocation>
        <location evidence="1">Secreted</location>
        <location evidence="1">Cell wall</location>
    </subcellularLocation>
    <text evidence="1">Covers the surface of the germ tube.</text>
</comment>
<comment type="domain">
    <text evidence="1">Each ALS protein has a similar three-domain structure, including a N-ter domain of 433-436 amino acids that is 55-90 percent identical across the family and which mediates adherence to various materials; a central domain of variable numbers of tandemly repeated copies of a 36 amino acid motif; and a C-ter domain that is relatively variable in length and sequence across the family.</text>
</comment>
<comment type="PTM">
    <text evidence="1">The GPI-anchor is attached to the protein in the endoplasmic reticulum and serves to target the protein to the cell surface. There, the glucosamine-inositol phospholipid moiety is cleaved off and the GPI-modified mannoprotein is covalently attached via its lipidless GPI glycan remnant to the 1,6-beta-glucan of the outer cell wall layer.</text>
</comment>
<comment type="similarity">
    <text evidence="4">Belongs to the ALS family.</text>
</comment>
<reference key="1">
    <citation type="journal article" date="1998" name="Curr. Genet.">
        <title>Candida albicans ALS3 and insights into the nature of the ALS gene family.</title>
        <authorList>
            <person name="Hoyer L.L."/>
            <person name="Payne T.L."/>
            <person name="Bell M."/>
            <person name="Myers A.M."/>
            <person name="Scherer S."/>
        </authorList>
    </citation>
    <scope>NUCLEOTIDE SEQUENCE [GENOMIC DNA]</scope>
    <source>
        <strain>1161</strain>
    </source>
</reference>
<proteinExistence type="evidence at protein level"/>
<gene>
    <name type="primary">ALS3</name>
    <name type="synonym">ALD8</name>
</gene>
<organism>
    <name type="scientific">Candida albicans</name>
    <name type="common">Yeast</name>
    <dbReference type="NCBI Taxonomy" id="5476"/>
    <lineage>
        <taxon>Eukaryota</taxon>
        <taxon>Fungi</taxon>
        <taxon>Dikarya</taxon>
        <taxon>Ascomycota</taxon>
        <taxon>Saccharomycotina</taxon>
        <taxon>Pichiomycetes</taxon>
        <taxon>Debaryomycetaceae</taxon>
        <taxon>Candida/Lodderomyces clade</taxon>
        <taxon>Candida</taxon>
    </lineage>
</organism>
<feature type="signal peptide" evidence="2">
    <location>
        <begin position="1"/>
        <end position="17"/>
    </location>
</feature>
<feature type="chain" id="PRO_0000020693" description="Agglutinin-like protein 3">
    <location>
        <begin position="18"/>
        <end position="1098"/>
    </location>
</feature>
<feature type="propeptide" id="PRO_0000420220" description="Removed in mature form" evidence="2">
    <location>
        <begin position="1099"/>
        <end position="1119"/>
    </location>
</feature>
<feature type="repeat" description="ALS 1">
    <location>
        <begin position="365"/>
        <end position="396"/>
    </location>
</feature>
<feature type="repeat" description="ALS 2">
    <location>
        <begin position="401"/>
        <end position="432"/>
    </location>
</feature>
<feature type="repeat" description="ALS 3">
    <location>
        <begin position="438"/>
        <end position="469"/>
    </location>
</feature>
<feature type="repeat" description="ALS 4">
    <location>
        <begin position="474"/>
        <end position="505"/>
    </location>
</feature>
<feature type="repeat" description="ALS 5">
    <location>
        <begin position="510"/>
        <end position="541"/>
    </location>
</feature>
<feature type="repeat" description="ALS 6">
    <location>
        <begin position="546"/>
        <end position="577"/>
    </location>
</feature>
<feature type="repeat" description="ALS 7">
    <location>
        <begin position="582"/>
        <end position="613"/>
    </location>
</feature>
<feature type="repeat" description="ALS 8">
    <location>
        <begin position="618"/>
        <end position="649"/>
    </location>
</feature>
<feature type="repeat" description="ALS 9">
    <location>
        <begin position="654"/>
        <end position="685"/>
    </location>
</feature>
<feature type="repeat" description="ALS 10">
    <location>
        <begin position="690"/>
        <end position="721"/>
    </location>
</feature>
<feature type="repeat" description="ALS 11">
    <location>
        <begin position="726"/>
        <end position="757"/>
    </location>
</feature>
<feature type="repeat" description="ALS 12">
    <location>
        <begin position="762"/>
        <end position="793"/>
    </location>
</feature>
<feature type="repeat" description="ALS 13">
    <location>
        <begin position="798"/>
        <end position="827"/>
    </location>
</feature>
<feature type="region of interest" description="Disordered" evidence="3">
    <location>
        <begin position="892"/>
        <end position="1077"/>
    </location>
</feature>
<feature type="compositionally biased region" description="Low complexity" evidence="3">
    <location>
        <begin position="894"/>
        <end position="929"/>
    </location>
</feature>
<feature type="compositionally biased region" description="Polar residues" evidence="3">
    <location>
        <begin position="930"/>
        <end position="941"/>
    </location>
</feature>
<feature type="compositionally biased region" description="Polar residues" evidence="3">
    <location>
        <begin position="947"/>
        <end position="965"/>
    </location>
</feature>
<feature type="compositionally biased region" description="Low complexity" evidence="3">
    <location>
        <begin position="974"/>
        <end position="983"/>
    </location>
</feature>
<feature type="compositionally biased region" description="Low complexity" evidence="3">
    <location>
        <begin position="998"/>
        <end position="1022"/>
    </location>
</feature>
<feature type="compositionally biased region" description="Low complexity" evidence="3">
    <location>
        <begin position="1035"/>
        <end position="1048"/>
    </location>
</feature>
<feature type="compositionally biased region" description="Low complexity" evidence="3">
    <location>
        <begin position="1057"/>
        <end position="1077"/>
    </location>
</feature>
<feature type="lipid moiety-binding region" description="GPI-anchor amidated serine" evidence="2">
    <location>
        <position position="1098"/>
    </location>
</feature>
<feature type="glycosylation site" description="N-linked (GlcNAc...) asparagine" evidence="2">
    <location>
        <position position="471"/>
    </location>
</feature>
<feature type="glycosylation site" description="N-linked (GlcNAc...) asparagine" evidence="2">
    <location>
        <position position="543"/>
    </location>
</feature>
<feature type="glycosylation site" description="N-linked (GlcNAc...) asparagine" evidence="2">
    <location>
        <position position="579"/>
    </location>
</feature>
<feature type="glycosylation site" description="N-linked (GlcNAc...) asparagine" evidence="2">
    <location>
        <position position="651"/>
    </location>
</feature>
<feature type="glycosylation site" description="N-linked (GlcNAc...) asparagine" evidence="2">
    <location>
        <position position="687"/>
    </location>
</feature>
<feature type="glycosylation site" description="N-linked (GlcNAc...) asparagine" evidence="2">
    <location>
        <position position="723"/>
    </location>
</feature>
<feature type="glycosylation site" description="N-linked (GlcNAc...) asparagine" evidence="2">
    <location>
        <position position="759"/>
    </location>
</feature>
<feature type="glycosylation site" description="N-linked (GlcNAc...) asparagine" evidence="2">
    <location>
        <position position="845"/>
    </location>
</feature>
<feature type="glycosylation site" description="N-linked (GlcNAc...) asparagine" evidence="2">
    <location>
        <position position="987"/>
    </location>
</feature>
<feature type="glycosylation site" description="N-linked (GlcNAc...) asparagine" evidence="2">
    <location>
        <position position="1050"/>
    </location>
</feature>
<feature type="glycosylation site" description="N-linked (GlcNAc...) asparagine" evidence="2">
    <location>
        <position position="1061"/>
    </location>
</feature>
<feature type="disulfide bond" evidence="1">
    <location>
        <begin position="73"/>
        <end position="150"/>
    </location>
</feature>
<feature type="disulfide bond" evidence="1">
    <location>
        <begin position="96"/>
        <end position="112"/>
    </location>
</feature>
<feature type="disulfide bond" evidence="1">
    <location>
        <begin position="205"/>
        <end position="298"/>
    </location>
</feature>
<feature type="disulfide bond" evidence="1">
    <location>
        <begin position="227"/>
        <end position="256"/>
    </location>
</feature>